<gene>
    <name type="primary">swp-1</name>
    <name type="synonym">swap</name>
    <name type="ORF">B0336.9</name>
</gene>
<reference key="1">
    <citation type="journal article" date="1994" name="Nucleic Acids Res.">
        <title>SWAP pre-mRNA splicing regulators are a novel, ancient protein family sharing a highly conserved sequence motif with the prp21 family of constitutive splicing proteins.</title>
        <authorList>
            <person name="Spikes D.A."/>
            <person name="Kramer J."/>
            <person name="Bingham P.M."/>
            <person name="van Doren K."/>
        </authorList>
    </citation>
    <scope>NUCLEOTIDE SEQUENCE [GENOMIC DNA / MRNA] (ISOFORM A)</scope>
</reference>
<reference key="2">
    <citation type="journal article" date="1998" name="Science">
        <title>Genome sequence of the nematode C. elegans: a platform for investigating biology.</title>
        <authorList>
            <consortium name="The C. elegans sequencing consortium"/>
        </authorList>
    </citation>
    <scope>NUCLEOTIDE SEQUENCE [LARGE SCALE GENOMIC DNA]</scope>
    <scope>ALTERNATIVE SPLICING</scope>
    <source>
        <strain>Bristol N2</strain>
    </source>
</reference>
<protein>
    <recommendedName>
        <fullName>Protein SWAP</fullName>
    </recommendedName>
    <alternativeName>
        <fullName>Suppressor of white apricot protein homolog</fullName>
    </alternativeName>
</protein>
<organism>
    <name type="scientific">Caenorhabditis elegans</name>
    <dbReference type="NCBI Taxonomy" id="6239"/>
    <lineage>
        <taxon>Eukaryota</taxon>
        <taxon>Metazoa</taxon>
        <taxon>Ecdysozoa</taxon>
        <taxon>Nematoda</taxon>
        <taxon>Chromadorea</taxon>
        <taxon>Rhabditida</taxon>
        <taxon>Rhabditina</taxon>
        <taxon>Rhabditomorpha</taxon>
        <taxon>Rhabditoidea</taxon>
        <taxon>Rhabditidae</taxon>
        <taxon>Peloderinae</taxon>
        <taxon>Caenorhabditis</taxon>
    </lineage>
</organism>
<dbReference type="EMBL" id="U06932">
    <property type="protein sequence ID" value="AAA64937.1"/>
    <property type="molecule type" value="mRNA"/>
</dbReference>
<dbReference type="EMBL" id="U06933">
    <property type="protein sequence ID" value="AAA64938.1"/>
    <property type="molecule type" value="Genomic_DNA"/>
</dbReference>
<dbReference type="EMBL" id="FO080138">
    <property type="protein sequence ID" value="CCD61525.1"/>
    <property type="molecule type" value="Genomic_DNA"/>
</dbReference>
<dbReference type="EMBL" id="FO080138">
    <property type="protein sequence ID" value="CCD61526.1"/>
    <property type="molecule type" value="Genomic_DNA"/>
</dbReference>
<dbReference type="PIR" id="S53765">
    <property type="entry name" value="S50095"/>
</dbReference>
<dbReference type="RefSeq" id="NP_001021120.1">
    <property type="nucleotide sequence ID" value="NM_001025949.4"/>
</dbReference>
<dbReference type="RefSeq" id="NP_001367326.1">
    <molecule id="Q10580-2"/>
    <property type="nucleotide sequence ID" value="NM_001379724.2"/>
</dbReference>
<dbReference type="RefSeq" id="NP_741149.1">
    <molecule id="Q10580-1"/>
    <property type="nucleotide sequence ID" value="NM_171132.4"/>
</dbReference>
<dbReference type="SMR" id="Q10580"/>
<dbReference type="BioGRID" id="41022">
    <property type="interactions" value="3"/>
</dbReference>
<dbReference type="DIP" id="DIP-26070N"/>
<dbReference type="FunCoup" id="Q10580">
    <property type="interactions" value="281"/>
</dbReference>
<dbReference type="IntAct" id="Q10580">
    <property type="interactions" value="1"/>
</dbReference>
<dbReference type="MINT" id="Q10580"/>
<dbReference type="STRING" id="6239.B0336.9d.1"/>
<dbReference type="PaxDb" id="6239-B0336.9d"/>
<dbReference type="PeptideAtlas" id="Q10580"/>
<dbReference type="EnsemblMetazoa" id="B0336.9a.1">
    <molecule id="Q10580-1"/>
    <property type="protein sequence ID" value="B0336.9a.1"/>
    <property type="gene ID" value="WBGene00006359"/>
</dbReference>
<dbReference type="EnsemblMetazoa" id="B0336.9b.1">
    <molecule id="Q10580-2"/>
    <property type="protein sequence ID" value="B0336.9b.1"/>
    <property type="gene ID" value="WBGene00006359"/>
</dbReference>
<dbReference type="EnsemblMetazoa" id="B0336.9b.2">
    <molecule id="Q10580-2"/>
    <property type="protein sequence ID" value="B0336.9b.2"/>
    <property type="gene ID" value="WBGene00006359"/>
</dbReference>
<dbReference type="EnsemblMetazoa" id="B0336.9b.3">
    <molecule id="Q10580-2"/>
    <property type="protein sequence ID" value="B0336.9b.3"/>
    <property type="gene ID" value="WBGene00006359"/>
</dbReference>
<dbReference type="EnsemblMetazoa" id="B0336.9b.4">
    <molecule id="Q10580-2"/>
    <property type="protein sequence ID" value="B0336.9b.4"/>
    <property type="gene ID" value="WBGene00006359"/>
</dbReference>
<dbReference type="EnsemblMetazoa" id="B0336.9b.5">
    <molecule id="Q10580-2"/>
    <property type="protein sequence ID" value="B0336.9b.5"/>
    <property type="gene ID" value="WBGene00006359"/>
</dbReference>
<dbReference type="EnsemblMetazoa" id="B0336.9b.6">
    <molecule id="Q10580-2"/>
    <property type="protein sequence ID" value="B0336.9b.6"/>
    <property type="gene ID" value="WBGene00006359"/>
</dbReference>
<dbReference type="GeneID" id="175795"/>
<dbReference type="KEGG" id="cel:CELE_B0336.9"/>
<dbReference type="UCSC" id="B0336.9b.1">
    <molecule id="Q10580-1"/>
    <property type="organism name" value="c. elegans"/>
</dbReference>
<dbReference type="AGR" id="WB:WBGene00006359"/>
<dbReference type="CTD" id="175795"/>
<dbReference type="WormBase" id="B0336.9a">
    <molecule id="Q10580-1"/>
    <property type="protein sequence ID" value="CE31143"/>
    <property type="gene ID" value="WBGene00006359"/>
    <property type="gene designation" value="swp-1"/>
</dbReference>
<dbReference type="WormBase" id="B0336.9b">
    <molecule id="Q10580-2"/>
    <property type="protein sequence ID" value="CE30068"/>
    <property type="gene ID" value="WBGene00006359"/>
    <property type="gene designation" value="swp-1"/>
</dbReference>
<dbReference type="eggNOG" id="KOG1847">
    <property type="taxonomic scope" value="Eukaryota"/>
</dbReference>
<dbReference type="InParanoid" id="Q10580"/>
<dbReference type="OrthoDB" id="5836667at2759"/>
<dbReference type="PRO" id="PR:Q10580"/>
<dbReference type="Proteomes" id="UP000001940">
    <property type="component" value="Chromosome III"/>
</dbReference>
<dbReference type="Bgee" id="WBGene00006359">
    <property type="expression patterns" value="Expressed in germ line (C elegans) and 4 other cell types or tissues"/>
</dbReference>
<dbReference type="ExpressionAtlas" id="Q10580">
    <property type="expression patterns" value="baseline and differential"/>
</dbReference>
<dbReference type="GO" id="GO:0003723">
    <property type="term" value="F:RNA binding"/>
    <property type="evidence" value="ECO:0007669"/>
    <property type="project" value="UniProtKB-KW"/>
</dbReference>
<dbReference type="GO" id="GO:0000395">
    <property type="term" value="P:mRNA 5'-splice site recognition"/>
    <property type="evidence" value="ECO:0000318"/>
    <property type="project" value="GO_Central"/>
</dbReference>
<dbReference type="FunFam" id="1.10.10.790:FF:000024">
    <property type="entry name" value="Protein SWAP"/>
    <property type="match status" value="1"/>
</dbReference>
<dbReference type="Gene3D" id="1.10.10.790">
    <property type="entry name" value="Surp module"/>
    <property type="match status" value="2"/>
</dbReference>
<dbReference type="InterPro" id="IPR000061">
    <property type="entry name" value="Surp"/>
</dbReference>
<dbReference type="InterPro" id="IPR040397">
    <property type="entry name" value="SWAP"/>
</dbReference>
<dbReference type="InterPro" id="IPR035967">
    <property type="entry name" value="SWAP/Surp_sf"/>
</dbReference>
<dbReference type="InterPro" id="IPR019147">
    <property type="entry name" value="SWAP_N_domain"/>
</dbReference>
<dbReference type="PANTHER" id="PTHR13161">
    <property type="entry name" value="SPLICING FACTOR SUPPRESSOR OF WHITE APRICOT"/>
    <property type="match status" value="1"/>
</dbReference>
<dbReference type="PANTHER" id="PTHR13161:SF15">
    <property type="entry name" value="SPLICING FACTOR, SUPPRESSOR OF WHITE-APRICOT HOMOLOG"/>
    <property type="match status" value="1"/>
</dbReference>
<dbReference type="Pfam" id="PF09750">
    <property type="entry name" value="DRY_EERY"/>
    <property type="match status" value="1"/>
</dbReference>
<dbReference type="Pfam" id="PF01805">
    <property type="entry name" value="Surp"/>
    <property type="match status" value="2"/>
</dbReference>
<dbReference type="SMART" id="SM01141">
    <property type="entry name" value="DRY_EERY"/>
    <property type="match status" value="1"/>
</dbReference>
<dbReference type="SMART" id="SM00648">
    <property type="entry name" value="SWAP"/>
    <property type="match status" value="2"/>
</dbReference>
<dbReference type="SUPFAM" id="SSF109905">
    <property type="entry name" value="Surp module (SWAP domain)"/>
    <property type="match status" value="2"/>
</dbReference>
<dbReference type="PROSITE" id="PS50128">
    <property type="entry name" value="SURP"/>
    <property type="match status" value="2"/>
</dbReference>
<name>SWAP_CAEEL</name>
<feature type="chain" id="PRO_0000072341" description="Protein SWAP">
    <location>
        <begin position="1"/>
        <end position="749"/>
    </location>
</feature>
<feature type="repeat" description="SURP motif 1">
    <location>
        <begin position="166"/>
        <end position="209"/>
    </location>
</feature>
<feature type="repeat" description="SURP motif 2">
    <location>
        <begin position="391"/>
        <end position="431"/>
    </location>
</feature>
<feature type="region of interest" description="Dry CEEERYL">
    <location>
        <begin position="8"/>
        <end position="124"/>
    </location>
</feature>
<feature type="region of interest" description="Disordered" evidence="1">
    <location>
        <begin position="105"/>
        <end position="149"/>
    </location>
</feature>
<feature type="region of interest" description="Disordered" evidence="1">
    <location>
        <begin position="256"/>
        <end position="310"/>
    </location>
</feature>
<feature type="region of interest" description="Disordered" evidence="1">
    <location>
        <begin position="458"/>
        <end position="498"/>
    </location>
</feature>
<feature type="region of interest" description="Disordered" evidence="1">
    <location>
        <begin position="537"/>
        <end position="592"/>
    </location>
</feature>
<feature type="region of interest" description="Disordered" evidence="1">
    <location>
        <begin position="608"/>
        <end position="749"/>
    </location>
</feature>
<feature type="compositionally biased region" description="Basic and acidic residues" evidence="1">
    <location>
        <begin position="105"/>
        <end position="118"/>
    </location>
</feature>
<feature type="compositionally biased region" description="Low complexity" evidence="1">
    <location>
        <begin position="458"/>
        <end position="478"/>
    </location>
</feature>
<feature type="compositionally biased region" description="Basic and acidic residues" evidence="1">
    <location>
        <begin position="538"/>
        <end position="552"/>
    </location>
</feature>
<feature type="compositionally biased region" description="Polar residues" evidence="1">
    <location>
        <begin position="560"/>
        <end position="569"/>
    </location>
</feature>
<feature type="compositionally biased region" description="Pro residues" evidence="1">
    <location>
        <begin position="574"/>
        <end position="583"/>
    </location>
</feature>
<feature type="compositionally biased region" description="Basic and acidic residues" evidence="1">
    <location>
        <begin position="608"/>
        <end position="659"/>
    </location>
</feature>
<feature type="compositionally biased region" description="Basic and acidic residues" evidence="1">
    <location>
        <begin position="679"/>
        <end position="689"/>
    </location>
</feature>
<feature type="compositionally biased region" description="Basic residues" evidence="1">
    <location>
        <begin position="690"/>
        <end position="704"/>
    </location>
</feature>
<feature type="compositionally biased region" description="Basic residues" evidence="1">
    <location>
        <begin position="714"/>
        <end position="749"/>
    </location>
</feature>
<feature type="splice variant" id="VSP_004438" description="In isoform b." evidence="2">
    <location>
        <begin position="1"/>
        <end position="84"/>
    </location>
</feature>
<feature type="splice variant" id="VSP_004439" description="In isoform b." evidence="2">
    <location>
        <begin position="514"/>
        <end position="515"/>
    </location>
</feature>
<evidence type="ECO:0000256" key="1">
    <source>
        <dbReference type="SAM" id="MobiDB-lite"/>
    </source>
</evidence>
<evidence type="ECO:0000305" key="2"/>
<proteinExistence type="evidence at transcript level"/>
<keyword id="KW-0025">Alternative splicing</keyword>
<keyword id="KW-0507">mRNA processing</keyword>
<keyword id="KW-0508">mRNA splicing</keyword>
<keyword id="KW-1185">Reference proteome</keyword>
<keyword id="KW-0677">Repeat</keyword>
<keyword id="KW-0694">RNA-binding</keyword>
<keyword id="KW-0804">Transcription</keyword>
<keyword id="KW-0805">Transcription regulation</keyword>
<comment type="function">
    <text>It is a regulator of pre-mRNA splicing (and, possibly, of other RNA processing events). It may regulate its own expression at the level of RNA processing.</text>
</comment>
<comment type="alternative products">
    <event type="alternative splicing"/>
    <isoform>
        <id>Q10580-1</id>
        <name>a</name>
        <sequence type="displayed"/>
    </isoform>
    <isoform>
        <id>Q10580-2</id>
        <name>b</name>
        <sequence type="described" ref="VSP_004438 VSP_004439"/>
    </isoform>
</comment>
<sequence length="749" mass="86310">MPCNCFKSNVHVQEYKDLLVFGYASTIFPNDYQSEHIAEERHTVPCLGDPENRVDRYDCRLLLPSIDVAIKRNGSPSEQCPTEAMEEDMCEEERYLDMYKDIQREQEKEEEEKRRNDQRNAIGFDYGTGKVKARESDSEDEPFEPPEGIKFPVGLELPSNMKLHHIIEKTASFIVANGTQMEIVIKAKQRNNAEQFGFLEFDHRLNPFYKYLQKLIREKKYIPDLNKRPKKLTKTSRASTSKPAISSSLAAIAAAHGSDSEDSDSDYELHPSLLSGGAKRPVTPEKPGAIGPRKKPVEPEKPPDFTLKPVGDISQRNDVYAALFKNLAHVTRQAAGVEEVKMNVEEAKKEKENDHLDDPEYREWYENFYGRPCPWIGPRPMIPATPDLEPILNSYAEHVAQRGLEAEASLAAREDLQLHFMEPKSPYYSYYHHKVRMHQWRMYQPIEQNLSPLVLNSPAPPSAVSSPGPSSLMSLNLSTPEPPLNRRQRRRLLDSSRLDESITEPGVIDPITMLQIPKSVSTPANLDILKTPISFSLRNDEPRDESSFRFDPDLDETAGPSDTTANFSDISGLFPPPTPPVIPPSTQMQVDRKEKARIFMEKLLQEKKAKKLQEEEERSKLEEETRKKAEKISESLSERKNTGRSDRREEAPKGARSLDEIINNRINSLLSESGFEPVEEMKRTDEDRERKRHRKRSRSRRRSRSCSPRDRSREHKKSRKSGRHHRSRSRSSSRDRHRRNRSRSRDRRR</sequence>
<accession>Q10580</accession>
<accession>Q17484</accession>
<accession>Q8WQH0</accession>